<keyword id="KW-0010">Activator</keyword>
<keyword id="KW-0025">Alternative splicing</keyword>
<keyword id="KW-0217">Developmental protein</keyword>
<keyword id="KW-0238">DNA-binding</keyword>
<keyword id="KW-0539">Nucleus</keyword>
<keyword id="KW-1185">Reference proteome</keyword>
<keyword id="KW-0804">Transcription</keyword>
<keyword id="KW-0805">Transcription regulation</keyword>
<feature type="chain" id="PRO_0000076458" description="Segmentation protein cap'n'collar">
    <location>
        <begin position="1"/>
        <end position="1383"/>
    </location>
</feature>
<feature type="domain" description="bZIP" evidence="1">
    <location>
        <begin position="1195"/>
        <end position="1258"/>
    </location>
</feature>
<feature type="region of interest" description="Disordered" evidence="2">
    <location>
        <begin position="258"/>
        <end position="286"/>
    </location>
</feature>
<feature type="region of interest" description="Disordered" evidence="2">
    <location>
        <begin position="376"/>
        <end position="421"/>
    </location>
</feature>
<feature type="region of interest" description="Disordered" evidence="2">
    <location>
        <begin position="516"/>
        <end position="549"/>
    </location>
</feature>
<feature type="region of interest" description="Disordered" evidence="2">
    <location>
        <begin position="585"/>
        <end position="626"/>
    </location>
</feature>
<feature type="region of interest" description="Disordered" evidence="2">
    <location>
        <begin position="717"/>
        <end position="758"/>
    </location>
</feature>
<feature type="region of interest" description="Disordered" evidence="2">
    <location>
        <begin position="860"/>
        <end position="897"/>
    </location>
</feature>
<feature type="region of interest" description="Disordered" evidence="2">
    <location>
        <begin position="923"/>
        <end position="1026"/>
    </location>
</feature>
<feature type="region of interest" description="Disordered" evidence="2">
    <location>
        <begin position="1102"/>
        <end position="1157"/>
    </location>
</feature>
<feature type="region of interest" description="Basic motif" evidence="1">
    <location>
        <begin position="1197"/>
        <end position="1234"/>
    </location>
</feature>
<feature type="region of interest" description="Leucine-zipper" evidence="1">
    <location>
        <begin position="1237"/>
        <end position="1258"/>
    </location>
</feature>
<feature type="region of interest" description="Disordered" evidence="2">
    <location>
        <begin position="1297"/>
        <end position="1383"/>
    </location>
</feature>
<feature type="compositionally biased region" description="Polar residues" evidence="2">
    <location>
        <begin position="260"/>
        <end position="281"/>
    </location>
</feature>
<feature type="compositionally biased region" description="Basic and acidic residues" evidence="2">
    <location>
        <begin position="530"/>
        <end position="546"/>
    </location>
</feature>
<feature type="compositionally biased region" description="Basic residues" evidence="2">
    <location>
        <begin position="588"/>
        <end position="616"/>
    </location>
</feature>
<feature type="compositionally biased region" description="Pro residues" evidence="2">
    <location>
        <begin position="744"/>
        <end position="753"/>
    </location>
</feature>
<feature type="compositionally biased region" description="Low complexity" evidence="2">
    <location>
        <begin position="867"/>
        <end position="878"/>
    </location>
</feature>
<feature type="compositionally biased region" description="Low complexity" evidence="2">
    <location>
        <begin position="935"/>
        <end position="945"/>
    </location>
</feature>
<feature type="compositionally biased region" description="Polar residues" evidence="2">
    <location>
        <begin position="978"/>
        <end position="990"/>
    </location>
</feature>
<feature type="compositionally biased region" description="Low complexity" evidence="2">
    <location>
        <begin position="1128"/>
        <end position="1146"/>
    </location>
</feature>
<feature type="compositionally biased region" description="Basic and acidic residues" evidence="2">
    <location>
        <begin position="1148"/>
        <end position="1157"/>
    </location>
</feature>
<feature type="compositionally biased region" description="Low complexity" evidence="2">
    <location>
        <begin position="1299"/>
        <end position="1320"/>
    </location>
</feature>
<feature type="compositionally biased region" description="Low complexity" evidence="2">
    <location>
        <begin position="1346"/>
        <end position="1383"/>
    </location>
</feature>
<feature type="splice variant" id="VSP_009458" description="In isoform A." evidence="5 6 7">
    <location>
        <begin position="1"/>
        <end position="850"/>
    </location>
</feature>
<feature type="splice variant" id="VSP_009457" description="In isoform B." evidence="7 8">
    <location>
        <begin position="1"/>
        <end position="578"/>
    </location>
</feature>
<feature type="sequence conflict" description="In Ref. 2; AAC72898." evidence="9" ref="2">
    <original>G</original>
    <variation>A</variation>
    <location>
        <position position="137"/>
    </location>
</feature>
<feature type="sequence conflict" description="In Ref. 2; AAC72898." evidence="9" ref="2">
    <original>G</original>
    <variation>S</variation>
    <location>
        <position position="150"/>
    </location>
</feature>
<feature type="sequence conflict" description="In Ref. 2; AAC72898." evidence="9" ref="2">
    <original>D</original>
    <variation>E</variation>
    <location>
        <position position="301"/>
    </location>
</feature>
<feature type="sequence conflict" description="In Ref. 2; AAC72898 and 6; ABE01198." evidence="9" ref="2 6">
    <original>I</original>
    <variation>V</variation>
    <location>
        <position position="309"/>
    </location>
</feature>
<feature type="sequence conflict" description="In Ref. 2; AAC72898." evidence="9" ref="2">
    <original>A</original>
    <variation>G</variation>
    <location>
        <position position="370"/>
    </location>
</feature>
<feature type="sequence conflict" description="In Ref. 2; AAC72898 and 6; ACV32772." evidence="9" ref="2 6">
    <original>A</original>
    <variation>T</variation>
    <location>
        <position position="583"/>
    </location>
</feature>
<feature type="sequence conflict" description="In Ref. 1; AAB59246." evidence="9" ref="1">
    <original>G</original>
    <variation>R</variation>
    <location>
        <position position="928"/>
    </location>
</feature>
<feature type="sequence conflict" description="In Ref. 1; AAB59246." evidence="9" ref="1">
    <original>S</original>
    <variation>T</variation>
    <location>
        <position position="935"/>
    </location>
</feature>
<feature type="sequence conflict" description="In Ref. 1; AAB59246." evidence="9" ref="1">
    <original>N</original>
    <variation>K</variation>
    <location>
        <position position="980"/>
    </location>
</feature>
<feature type="sequence conflict" description="In Ref. 2; AAC72897." evidence="9" ref="2">
    <original>H</original>
    <variation>Q</variation>
    <location>
        <position position="999"/>
    </location>
</feature>
<feature type="sequence conflict" description="In Ref. 1; AAB59246 and 2; AAC72897." evidence="9" ref="1 2">
    <original>S</original>
    <variation>R</variation>
    <location>
        <position position="1031"/>
    </location>
</feature>
<feature type="sequence conflict" description="In Ref. 1; AAB59246 and 2; AAC72896/AAC72897/AAC72898." evidence="9" ref="1 2">
    <original>G</original>
    <variation>R</variation>
    <location>
        <position position="1076"/>
    </location>
</feature>
<feature type="sequence conflict" description="In Ref. 1; AAB59246 and 2; AAC72897." evidence="9" ref="1 2">
    <original>D</original>
    <variation>H</variation>
    <location>
        <position position="1118"/>
    </location>
</feature>
<feature type="sequence conflict" description="In Ref. 1; AAB59246." evidence="9" ref="1">
    <original>I</original>
    <variation>L</variation>
    <location>
        <position position="1199"/>
    </location>
</feature>
<feature type="sequence conflict" description="In Ref. 1; AAB59246 and 2; AAC72897." evidence="9" ref="1 2">
    <original>S</original>
    <variation>W</variation>
    <location>
        <position position="1275"/>
    </location>
</feature>
<gene>
    <name type="primary">cnc</name>
    <name type="ORF">CG43286</name>
</gene>
<accession>P20482</accession>
<accession>A4V398</accession>
<accession>C7LAC2</accession>
<accession>O96506</accession>
<accession>Q1WWD8</accession>
<accession>Q9TZS3</accession>
<accession>Q9VCP6</accession>
<accession>Q9VCP8</accession>
<accession>Q9VCP9</accession>
<proteinExistence type="evidence at transcript level"/>
<name>CNC_DROME</name>
<organism>
    <name type="scientific">Drosophila melanogaster</name>
    <name type="common">Fruit fly</name>
    <dbReference type="NCBI Taxonomy" id="7227"/>
    <lineage>
        <taxon>Eukaryota</taxon>
        <taxon>Metazoa</taxon>
        <taxon>Ecdysozoa</taxon>
        <taxon>Arthropoda</taxon>
        <taxon>Hexapoda</taxon>
        <taxon>Insecta</taxon>
        <taxon>Pterygota</taxon>
        <taxon>Neoptera</taxon>
        <taxon>Endopterygota</taxon>
        <taxon>Diptera</taxon>
        <taxon>Brachycera</taxon>
        <taxon>Muscomorpha</taxon>
        <taxon>Ephydroidea</taxon>
        <taxon>Drosophilidae</taxon>
        <taxon>Drosophila</taxon>
        <taxon>Sophophora</taxon>
    </lineage>
</organism>
<protein>
    <recommendedName>
        <fullName>Segmentation protein cap'n'collar</fullName>
    </recommendedName>
</protein>
<dbReference type="EMBL" id="M37495">
    <property type="protein sequence ID" value="AAB59246.1"/>
    <property type="molecule type" value="mRNA"/>
</dbReference>
<dbReference type="EMBL" id="AF070062">
    <property type="protein sequence ID" value="AAC72896.1"/>
    <property type="molecule type" value="mRNA"/>
</dbReference>
<dbReference type="EMBL" id="AF070063">
    <property type="protein sequence ID" value="AAC72897.1"/>
    <property type="molecule type" value="mRNA"/>
</dbReference>
<dbReference type="EMBL" id="AF070064">
    <property type="protein sequence ID" value="AAC72898.1"/>
    <property type="status" value="ALT_FRAME"/>
    <property type="molecule type" value="mRNA"/>
</dbReference>
<dbReference type="EMBL" id="AE014297">
    <property type="protein sequence ID" value="AAF56108.1"/>
    <property type="molecule type" value="Genomic_DNA"/>
</dbReference>
<dbReference type="EMBL" id="AE014297">
    <property type="protein sequence ID" value="AAF56109.2"/>
    <property type="molecule type" value="Genomic_DNA"/>
</dbReference>
<dbReference type="EMBL" id="AE014297">
    <property type="protein sequence ID" value="AAF56111.2"/>
    <property type="molecule type" value="Genomic_DNA"/>
</dbReference>
<dbReference type="EMBL" id="AE014297">
    <property type="protein sequence ID" value="AAN13930.1"/>
    <property type="molecule type" value="Genomic_DNA"/>
</dbReference>
<dbReference type="EMBL" id="AE014297">
    <property type="protein sequence ID" value="AAN13931.1"/>
    <property type="molecule type" value="Genomic_DNA"/>
</dbReference>
<dbReference type="EMBL" id="AE014297">
    <property type="protein sequence ID" value="AAN13932.1"/>
    <property type="molecule type" value="Genomic_DNA"/>
</dbReference>
<dbReference type="EMBL" id="AE014297">
    <property type="protein sequence ID" value="AAN13933.1"/>
    <property type="molecule type" value="Genomic_DNA"/>
</dbReference>
<dbReference type="EMBL" id="AY061154">
    <property type="protein sequence ID" value="AAL28702.1"/>
    <property type="molecule type" value="mRNA"/>
</dbReference>
<dbReference type="EMBL" id="BT024968">
    <property type="protein sequence ID" value="ABE01198.1"/>
    <property type="status" value="ALT_SEQ"/>
    <property type="molecule type" value="mRNA"/>
</dbReference>
<dbReference type="EMBL" id="BT099672">
    <property type="protein sequence ID" value="ACV32772.1"/>
    <property type="status" value="ALT_INIT"/>
    <property type="molecule type" value="mRNA"/>
</dbReference>
<dbReference type="PIR" id="A33111">
    <property type="entry name" value="A33111"/>
</dbReference>
<dbReference type="PIR" id="T13936">
    <property type="entry name" value="T13936"/>
</dbReference>
<dbReference type="RefSeq" id="NP_001247256.1">
    <molecule id="P20482-3"/>
    <property type="nucleotide sequence ID" value="NM_001260327.2"/>
</dbReference>
<dbReference type="RefSeq" id="NP_001247257.1">
    <molecule id="P20482-3"/>
    <property type="nucleotide sequence ID" value="NM_001260328.1"/>
</dbReference>
<dbReference type="RefSeq" id="NP_001247259.1">
    <molecule id="P20482-1"/>
    <property type="nucleotide sequence ID" value="NM_001260330.1"/>
</dbReference>
<dbReference type="RefSeq" id="NP_001247260.1">
    <molecule id="P20482-1"/>
    <property type="nucleotide sequence ID" value="NM_001260331.1"/>
</dbReference>
<dbReference type="RefSeq" id="NP_732833.1">
    <molecule id="P20482-1"/>
    <property type="nucleotide sequence ID" value="NM_170053.3"/>
</dbReference>
<dbReference type="RefSeq" id="NP_732834.1">
    <molecule id="P20482-2"/>
    <property type="nucleotide sequence ID" value="NM_170054.4"/>
</dbReference>
<dbReference type="RefSeq" id="NP_732835.1">
    <molecule id="P20482-3"/>
    <property type="nucleotide sequence ID" value="NM_170055.2"/>
</dbReference>
<dbReference type="RefSeq" id="NP_732836.1">
    <molecule id="P20482-3"/>
    <property type="nucleotide sequence ID" value="NM_170056.2"/>
</dbReference>
<dbReference type="RefSeq" id="NP_732837.1">
    <molecule id="P20482-3"/>
    <property type="nucleotide sequence ID" value="NM_170057.2"/>
</dbReference>
<dbReference type="RefSeq" id="NP_732838.2">
    <property type="nucleotide sequence ID" value="NM_170058.2"/>
</dbReference>
<dbReference type="RefSeq" id="NP_732839.1">
    <molecule id="P20482-3"/>
    <property type="nucleotide sequence ID" value="NM_170059.3"/>
</dbReference>
<dbReference type="SMR" id="P20482"/>
<dbReference type="BioGRID" id="67688">
    <property type="interactions" value="42"/>
</dbReference>
<dbReference type="ELM" id="P20482"/>
<dbReference type="FunCoup" id="P20482">
    <property type="interactions" value="230"/>
</dbReference>
<dbReference type="IntAct" id="P20482">
    <property type="interactions" value="11"/>
</dbReference>
<dbReference type="STRING" id="7227.FBpp0303398"/>
<dbReference type="GlyGen" id="P20482">
    <property type="glycosylation" value="2 sites"/>
</dbReference>
<dbReference type="PaxDb" id="7227-FBpp0297671"/>
<dbReference type="DNASU" id="42743"/>
<dbReference type="EnsemblMetazoa" id="FBtr0306744">
    <molecule id="P20482-3"/>
    <property type="protein sequence ID" value="FBpp0297667"/>
    <property type="gene ID" value="FBgn0262975"/>
</dbReference>
<dbReference type="EnsemblMetazoa" id="FBtr0306745">
    <molecule id="P20482-3"/>
    <property type="protein sequence ID" value="FBpp0297668"/>
    <property type="gene ID" value="FBgn0262975"/>
</dbReference>
<dbReference type="EnsemblMetazoa" id="FBtr0306746">
    <molecule id="P20482-3"/>
    <property type="protein sequence ID" value="FBpp0297669"/>
    <property type="gene ID" value="FBgn0262975"/>
</dbReference>
<dbReference type="EnsemblMetazoa" id="FBtr0306747">
    <molecule id="P20482-3"/>
    <property type="protein sequence ID" value="FBpp0297670"/>
    <property type="gene ID" value="FBgn0262975"/>
</dbReference>
<dbReference type="EnsemblMetazoa" id="FBtr0306748">
    <molecule id="P20482-1"/>
    <property type="protein sequence ID" value="FBpp0297671"/>
    <property type="gene ID" value="FBgn0262975"/>
</dbReference>
<dbReference type="EnsemblMetazoa" id="FBtr0306749">
    <molecule id="P20482-2"/>
    <property type="protein sequence ID" value="FBpp0297672"/>
    <property type="gene ID" value="FBgn0262975"/>
</dbReference>
<dbReference type="EnsemblMetazoa" id="FBtr0306750">
    <molecule id="P20482-3"/>
    <property type="protein sequence ID" value="FBpp0297673"/>
    <property type="gene ID" value="FBgn0262975"/>
</dbReference>
<dbReference type="EnsemblMetazoa" id="FBtr0306751">
    <molecule id="P20482-3"/>
    <property type="protein sequence ID" value="FBpp0297674"/>
    <property type="gene ID" value="FBgn0262975"/>
</dbReference>
<dbReference type="EnsemblMetazoa" id="FBtr0306753">
    <molecule id="P20482-1"/>
    <property type="protein sequence ID" value="FBpp0297676"/>
    <property type="gene ID" value="FBgn0262975"/>
</dbReference>
<dbReference type="EnsemblMetazoa" id="FBtr0306754">
    <molecule id="P20482-1"/>
    <property type="protein sequence ID" value="FBpp0297677"/>
    <property type="gene ID" value="FBgn0262975"/>
</dbReference>
<dbReference type="GeneID" id="42743"/>
<dbReference type="KEGG" id="dme:Dmel_CG43286"/>
<dbReference type="UCSC" id="CG17894-RD">
    <property type="organism name" value="d. melanogaster"/>
</dbReference>
<dbReference type="AGR" id="FB:FBgn0262975"/>
<dbReference type="CTD" id="42743"/>
<dbReference type="FlyBase" id="FBgn0262975">
    <property type="gene designation" value="cnc"/>
</dbReference>
<dbReference type="VEuPathDB" id="VectorBase:FBgn0262975"/>
<dbReference type="eggNOG" id="KOG3863">
    <property type="taxonomic scope" value="Eukaryota"/>
</dbReference>
<dbReference type="InParanoid" id="P20482"/>
<dbReference type="OMA" id="TESFCRM"/>
<dbReference type="OrthoDB" id="7458135at2759"/>
<dbReference type="PhylomeDB" id="P20482"/>
<dbReference type="Reactome" id="R-DME-8951664">
    <property type="pathway name" value="Neddylation"/>
</dbReference>
<dbReference type="Reactome" id="R-DME-9755511">
    <property type="pathway name" value="KEAP1-NFE2L2 pathway"/>
</dbReference>
<dbReference type="Reactome" id="R-DME-9759194">
    <property type="pathway name" value="Nuclear events mediated by NFE2L2"/>
</dbReference>
<dbReference type="Reactome" id="R-DME-9762114">
    <property type="pathway name" value="GSK3B and BTRC:CUL1-mediated-degradation of NFE2L2"/>
</dbReference>
<dbReference type="Reactome" id="R-DME-983231">
    <property type="pathway name" value="Factors involved in megakaryocyte development and platelet production"/>
</dbReference>
<dbReference type="BioGRID-ORCS" id="42743">
    <property type="hits" value="0 hits in 3 CRISPR screens"/>
</dbReference>
<dbReference type="ChiTaRS" id="cnc">
    <property type="organism name" value="fly"/>
</dbReference>
<dbReference type="GenomeRNAi" id="42743"/>
<dbReference type="PRO" id="PR:P20482"/>
<dbReference type="Proteomes" id="UP000000803">
    <property type="component" value="Chromosome 3R"/>
</dbReference>
<dbReference type="Bgee" id="FBgn0262975">
    <property type="expression patterns" value="Expressed in epithelial cell in body wall and 282 other cell types or tissues"/>
</dbReference>
<dbReference type="ExpressionAtlas" id="P20482">
    <property type="expression patterns" value="baseline and differential"/>
</dbReference>
<dbReference type="GO" id="GO:0005634">
    <property type="term" value="C:nucleus"/>
    <property type="evidence" value="ECO:0000314"/>
    <property type="project" value="FlyBase"/>
</dbReference>
<dbReference type="GO" id="GO:0005703">
    <property type="term" value="C:polytene chromosome puff"/>
    <property type="evidence" value="ECO:0000314"/>
    <property type="project" value="FlyBase"/>
</dbReference>
<dbReference type="GO" id="GO:0001228">
    <property type="term" value="F:DNA-binding transcription activator activity, RNA polymerase II-specific"/>
    <property type="evidence" value="ECO:0000315"/>
    <property type="project" value="FlyBase"/>
</dbReference>
<dbReference type="GO" id="GO:0003700">
    <property type="term" value="F:DNA-binding transcription factor activity"/>
    <property type="evidence" value="ECO:0000304"/>
    <property type="project" value="FlyBase"/>
</dbReference>
<dbReference type="GO" id="GO:0000981">
    <property type="term" value="F:DNA-binding transcription factor activity, RNA polymerase II-specific"/>
    <property type="evidence" value="ECO:0000318"/>
    <property type="project" value="GO_Central"/>
</dbReference>
<dbReference type="GO" id="GO:0046982">
    <property type="term" value="F:protein heterodimerization activity"/>
    <property type="evidence" value="ECO:0000353"/>
    <property type="project" value="FlyBase"/>
</dbReference>
<dbReference type="GO" id="GO:0000978">
    <property type="term" value="F:RNA polymerase II cis-regulatory region sequence-specific DNA binding"/>
    <property type="evidence" value="ECO:0000318"/>
    <property type="project" value="GO_Central"/>
</dbReference>
<dbReference type="GO" id="GO:0007350">
    <property type="term" value="P:blastoderm segmentation"/>
    <property type="evidence" value="ECO:0000315"/>
    <property type="project" value="FlyBase"/>
</dbReference>
<dbReference type="GO" id="GO:0048813">
    <property type="term" value="P:dendrite morphogenesis"/>
    <property type="evidence" value="ECO:0000315"/>
    <property type="project" value="FlyBase"/>
</dbReference>
<dbReference type="GO" id="GO:0008340">
    <property type="term" value="P:determination of adult lifespan"/>
    <property type="evidence" value="ECO:0000315"/>
    <property type="project" value="FlyBase"/>
</dbReference>
<dbReference type="GO" id="GO:0060322">
    <property type="term" value="P:head development"/>
    <property type="evidence" value="ECO:0000315"/>
    <property type="project" value="FlyBase"/>
</dbReference>
<dbReference type="GO" id="GO:0160095">
    <property type="term" value="P:insect pharynx development"/>
    <property type="evidence" value="ECO:0000315"/>
    <property type="project" value="FlyBase"/>
</dbReference>
<dbReference type="GO" id="GO:0036335">
    <property type="term" value="P:intestinal stem cell homeostasis"/>
    <property type="evidence" value="ECO:0000315"/>
    <property type="project" value="FlyBase"/>
</dbReference>
<dbReference type="GO" id="GO:2000378">
    <property type="term" value="P:negative regulation of reactive oxygen species metabolic process"/>
    <property type="evidence" value="ECO:0000315"/>
    <property type="project" value="UniProtKB"/>
</dbReference>
<dbReference type="GO" id="GO:0007310">
    <property type="term" value="P:oocyte dorsal/ventral axis specification"/>
    <property type="evidence" value="ECO:0000315"/>
    <property type="project" value="FlyBase"/>
</dbReference>
<dbReference type="GO" id="GO:0008103">
    <property type="term" value="P:oocyte microtubule cytoskeleton polarization"/>
    <property type="evidence" value="ECO:0000315"/>
    <property type="project" value="FlyBase"/>
</dbReference>
<dbReference type="GO" id="GO:0051663">
    <property type="term" value="P:oocyte nucleus localization involved in oocyte dorsal/ventral axis specification"/>
    <property type="evidence" value="ECO:0000315"/>
    <property type="project" value="FlyBase"/>
</dbReference>
<dbReference type="GO" id="GO:0045944">
    <property type="term" value="P:positive regulation of transcription by RNA polymerase II"/>
    <property type="evidence" value="ECO:0000314"/>
    <property type="project" value="FlyBase"/>
</dbReference>
<dbReference type="GO" id="GO:0008359">
    <property type="term" value="P:regulation of bicoid mRNA localization"/>
    <property type="evidence" value="ECO:0000315"/>
    <property type="project" value="FlyBase"/>
</dbReference>
<dbReference type="GO" id="GO:0007317">
    <property type="term" value="P:regulation of pole plasm oskar mRNA localization"/>
    <property type="evidence" value="ECO:0000315"/>
    <property type="project" value="FlyBase"/>
</dbReference>
<dbReference type="GO" id="GO:0006357">
    <property type="term" value="P:regulation of transcription by RNA polymerase II"/>
    <property type="evidence" value="ECO:0000318"/>
    <property type="project" value="GO_Central"/>
</dbReference>
<dbReference type="GO" id="GO:0034976">
    <property type="term" value="P:response to endoplasmic reticulum stress"/>
    <property type="evidence" value="ECO:0000315"/>
    <property type="project" value="FlyBase"/>
</dbReference>
<dbReference type="GO" id="GO:0006979">
    <property type="term" value="P:response to oxidative stress"/>
    <property type="evidence" value="ECO:0000315"/>
    <property type="project" value="FlyBase"/>
</dbReference>
<dbReference type="CDD" id="cd14698">
    <property type="entry name" value="bZIP_CNC"/>
    <property type="match status" value="1"/>
</dbReference>
<dbReference type="FunFam" id="1.10.880.10:FF:000004">
    <property type="entry name" value="Nuclear factor, erythroid 2"/>
    <property type="match status" value="1"/>
</dbReference>
<dbReference type="Gene3D" id="1.10.880.10">
    <property type="entry name" value="Transcription factor, Skn-1-like, DNA-binding domain"/>
    <property type="match status" value="1"/>
</dbReference>
<dbReference type="InterPro" id="IPR004827">
    <property type="entry name" value="bZIP"/>
</dbReference>
<dbReference type="InterPro" id="IPR004826">
    <property type="entry name" value="bZIP_Maf"/>
</dbReference>
<dbReference type="InterPro" id="IPR046347">
    <property type="entry name" value="bZIP_sf"/>
</dbReference>
<dbReference type="InterPro" id="IPR047167">
    <property type="entry name" value="NFE2-like"/>
</dbReference>
<dbReference type="InterPro" id="IPR008917">
    <property type="entry name" value="TF_DNA-bd_sf"/>
</dbReference>
<dbReference type="PANTHER" id="PTHR24411">
    <property type="entry name" value="NUCLEAR FACTOR ERYTHROID 2-RELATED FACTOR"/>
    <property type="match status" value="1"/>
</dbReference>
<dbReference type="PANTHER" id="PTHR24411:SF55">
    <property type="entry name" value="SEGMENTATION PROTEIN CAP'N'COLLAR"/>
    <property type="match status" value="1"/>
</dbReference>
<dbReference type="Pfam" id="PF03131">
    <property type="entry name" value="bZIP_Maf"/>
    <property type="match status" value="1"/>
</dbReference>
<dbReference type="SMART" id="SM00338">
    <property type="entry name" value="BRLZ"/>
    <property type="match status" value="1"/>
</dbReference>
<dbReference type="SUPFAM" id="SSF47454">
    <property type="entry name" value="A DNA-binding domain in eukaryotic transcription factors"/>
    <property type="match status" value="1"/>
</dbReference>
<dbReference type="SUPFAM" id="SSF57959">
    <property type="entry name" value="Leucine zipper domain"/>
    <property type="match status" value="1"/>
</dbReference>
<dbReference type="PROSITE" id="PS50217">
    <property type="entry name" value="BZIP"/>
    <property type="match status" value="1"/>
</dbReference>
<dbReference type="PROSITE" id="PS00036">
    <property type="entry name" value="BZIP_BASIC"/>
    <property type="match status" value="1"/>
</dbReference>
<comment type="function">
    <text evidence="3 4">Plays a role in posterior cephalic patterning. Probable subunit of a heterodimeric regulatory protein involved in the control of head morphogenesis. Isoform B may have a repressive effect on Dfd response elements, thereby modifying the activity and specificity of the Hox system and moving the body anterior/posterior axis.</text>
</comment>
<comment type="subcellular location">
    <subcellularLocation>
        <location evidence="1 4">Nucleus</location>
    </subcellularLocation>
</comment>
<comment type="alternative products">
    <event type="alternative splicing"/>
    <isoform>
        <id>P20482-1</id>
        <name>C</name>
        <sequence type="displayed"/>
    </isoform>
    <isoform>
        <id>P20482-2</id>
        <name>B</name>
        <sequence type="described" ref="VSP_009457"/>
    </isoform>
    <isoform>
        <id>P20482-3</id>
        <name>A</name>
        <name>D</name>
        <name>E</name>
        <name>F</name>
        <name>G</name>
        <sequence type="described" ref="VSP_009458"/>
    </isoform>
</comment>
<comment type="tissue specificity">
    <text evidence="3 4">Embryonic expression of isoform B is localized to the mandibular segment and the hypopharyngeal and labral primordia first detectable in late blastoderm stages. Embryonic expression of isoforms B and C is ubiquitous.</text>
</comment>
<comment type="developmental stage">
    <text evidence="4">Isoforms A and C are maternally and zygotically expressed in embryos. Isoform A reduced between 2-12 hours embryos and then increases. Isoform B is expressed in later embryonic stages. Isoform C has the lowest expression level of the isoforms.</text>
</comment>
<comment type="similarity">
    <text evidence="9">Belongs to the bZIP family. CNC subfamily.</text>
</comment>
<comment type="sequence caution" evidence="9">
    <conflict type="frameshift">
        <sequence resource="EMBL-CDS" id="AAC72898"/>
    </conflict>
</comment>
<comment type="sequence caution" evidence="9">
    <conflict type="miscellaneous discrepancy">
        <sequence resource="EMBL-CDS" id="ABE01198"/>
    </conflict>
    <text>Contaminating sequence. Potential poly-A sequence.</text>
</comment>
<comment type="sequence caution" evidence="9">
    <conflict type="erroneous initiation">
        <sequence resource="EMBL-CDS" id="ACV32772"/>
    </conflict>
    <text>Extended N-terminus.</text>
</comment>
<evidence type="ECO:0000255" key="1">
    <source>
        <dbReference type="PROSITE-ProRule" id="PRU00978"/>
    </source>
</evidence>
<evidence type="ECO:0000256" key="2">
    <source>
        <dbReference type="SAM" id="MobiDB-lite"/>
    </source>
</evidence>
<evidence type="ECO:0000269" key="3">
    <source>
    </source>
</evidence>
<evidence type="ECO:0000269" key="4">
    <source>
    </source>
</evidence>
<evidence type="ECO:0000303" key="5">
    <source>
    </source>
</evidence>
<evidence type="ECO:0000303" key="6">
    <source>
    </source>
</evidence>
<evidence type="ECO:0000303" key="7">
    <source>
    </source>
</evidence>
<evidence type="ECO:0000303" key="8">
    <source ref="6"/>
</evidence>
<evidence type="ECO:0000305" key="9"/>
<sequence>MISNKKSYAMKMLQLALALSLLHYNPDYLLHRWDSQLELGTHGDGWELEMLRTVHRLDMDHNPYGNRKGLSPRIEDLLNFDDPSLGGMANGIGGCKLPPRFNGSTFVMNLHNTTGNSSVQTAALQDVQSTSAAATGGTMVVGTGGAPTSGGQTSGSALGEIHIDTASLDPGNANHSPLHPTSELDTFLTPHALQDQRSIWEQNLADLYDYNDLSLQTSPYANLPLKDGQPQPSNSSHLDLSLAALLHGFTGGSGAPLSTAALNDSTPHPRNLGSVTNNSAGRSDDGEESLYLGRLFGEDEDEDYEGELIGGVANACEVEGLTTDEPFGSNCFANEVEIGDDEEESEIAEVLYKQDVDLGFSLDQEAIINASYASGNSAATNVKSKPEDETKSSDPSISESSGFKDTDVNAENEASAASVDDIEKLKALEELQQDKDKNNENQLEDITNEWNGIPFTIDNETGEYIRLPLDELLNDVLKLSEFPLQDDLSNDPVASTSQAAAAFNENQAQRIVSETGEDLLSGEGISSKQNRNEAKNKDNDPEKADGDSFSVSDFEELQNSVGSPLFDLDEDAKKELDEMLQSAVPSYHHPHPHHGHPHAHPHSHHHASMHHAHAHHAAAAAAAHQRAVQQANYGGGVGVGVGVGVGVGSGTGSAFQRQPAAGGFHHGHHQGRMPRLNRSVSMERLQDFATYFSPIPSMVGGVSDMSPYPHHYPGYSYQASPSNGAPGTPGQHGQYGSGANATLQPPPPPPPPHHAAMLHHPNAALGDICPTGQPHYGHNLGSAVTSSMHLTNSSHEADGAAAAAAAYKVEHDLMYYGNTSSDINQTDGFINSIFTDEDLHLMDMNESFCRMVDNSTSNNSSVLGLPSSGHVSNGSGSSAQLGAGNPHGNQANGASGGVGSMSGSAVGAGATGMTADLLASGGAGAQGGADRLDASSDSAVSSMGSERVPSLSDGEWGEGSDSAQDYHQGKYGGPYDFSYNNNSRLSTATRQPPVAQKKHQLYGKRDPHKQTPSALPPTAPPAAATAVQSQSIKYEYDAGYASSGMASGGISEPGAMGPALSKDYHHHQPYGMGASGSAFSGDYTVRPSPRTSQDLVQLNHTYSLPQGSGSLPRPQARDKKPLVATKTASKGASAGNSSSVGGNSSNLEEEHLTRDEKRARSLNIPISVPDIINLPMDEFNERLSKYDLSENQLSLIRDIRRRGKNKVAAQNCRKRKLDQILTLEDEVNAVVKRKTQLNQDRDHLESERKRISNKFAMLHRHVFQYLRDPEGNPCSPADYSLQQAADGSVYLLPREKSEGNNTATAASNAVSSASGGSLNGHVPTQAPMHSHQSHGMQAQHVVGGMSQQQQQQSRLPPHLQQQHHLQSQQQQPGGQQQQQHRKE</sequence>
<reference key="1">
    <citation type="journal article" date="1991" name="Mech. Dev.">
        <title>Segmentally restricted, cephalic expression of a leucine zipper gene during Drosophila embryogenesis.</title>
        <authorList>
            <person name="Mohler J."/>
            <person name="Vani K."/>
            <person name="Leung S."/>
            <person name="Epstein A."/>
        </authorList>
    </citation>
    <scope>NUCLEOTIDE SEQUENCE [MRNA] (ISOFORM A)</scope>
    <scope>FUNCTION</scope>
    <scope>TISSUE SPECIFICITY</scope>
</reference>
<reference key="2">
    <citation type="journal article" date="1998" name="Development">
        <title>A cap 'n' collar protein isoform contains a selective Hox repressor function.</title>
        <authorList>
            <person name="McGinnis N."/>
            <person name="Ragnhildstveit E."/>
            <person name="Veraksa A."/>
            <person name="McGinnis W."/>
        </authorList>
    </citation>
    <scope>NUCLEOTIDE SEQUENCE [MRNA] (ISOFORMS A; B AND C)</scope>
    <scope>FUNCTION</scope>
    <scope>SUBCELLULAR LOCATION</scope>
    <scope>TISSUE SPECIFICITY</scope>
    <scope>DEVELOPMENTAL STAGE</scope>
    <source>
        <tissue>Embryo</tissue>
    </source>
</reference>
<reference key="3">
    <citation type="journal article" date="2000" name="Science">
        <title>The genome sequence of Drosophila melanogaster.</title>
        <authorList>
            <person name="Adams M.D."/>
            <person name="Celniker S.E."/>
            <person name="Holt R.A."/>
            <person name="Evans C.A."/>
            <person name="Gocayne J.D."/>
            <person name="Amanatides P.G."/>
            <person name="Scherer S.E."/>
            <person name="Li P.W."/>
            <person name="Hoskins R.A."/>
            <person name="Galle R.F."/>
            <person name="George R.A."/>
            <person name="Lewis S.E."/>
            <person name="Richards S."/>
            <person name="Ashburner M."/>
            <person name="Henderson S.N."/>
            <person name="Sutton G.G."/>
            <person name="Wortman J.R."/>
            <person name="Yandell M.D."/>
            <person name="Zhang Q."/>
            <person name="Chen L.X."/>
            <person name="Brandon R.C."/>
            <person name="Rogers Y.-H.C."/>
            <person name="Blazej R.G."/>
            <person name="Champe M."/>
            <person name="Pfeiffer B.D."/>
            <person name="Wan K.H."/>
            <person name="Doyle C."/>
            <person name="Baxter E.G."/>
            <person name="Helt G."/>
            <person name="Nelson C.R."/>
            <person name="Miklos G.L.G."/>
            <person name="Abril J.F."/>
            <person name="Agbayani A."/>
            <person name="An H.-J."/>
            <person name="Andrews-Pfannkoch C."/>
            <person name="Baldwin D."/>
            <person name="Ballew R.M."/>
            <person name="Basu A."/>
            <person name="Baxendale J."/>
            <person name="Bayraktaroglu L."/>
            <person name="Beasley E.M."/>
            <person name="Beeson K.Y."/>
            <person name="Benos P.V."/>
            <person name="Berman B.P."/>
            <person name="Bhandari D."/>
            <person name="Bolshakov S."/>
            <person name="Borkova D."/>
            <person name="Botchan M.R."/>
            <person name="Bouck J."/>
            <person name="Brokstein P."/>
            <person name="Brottier P."/>
            <person name="Burtis K.C."/>
            <person name="Busam D.A."/>
            <person name="Butler H."/>
            <person name="Cadieu E."/>
            <person name="Center A."/>
            <person name="Chandra I."/>
            <person name="Cherry J.M."/>
            <person name="Cawley S."/>
            <person name="Dahlke C."/>
            <person name="Davenport L.B."/>
            <person name="Davies P."/>
            <person name="de Pablos B."/>
            <person name="Delcher A."/>
            <person name="Deng Z."/>
            <person name="Mays A.D."/>
            <person name="Dew I."/>
            <person name="Dietz S.M."/>
            <person name="Dodson K."/>
            <person name="Doup L.E."/>
            <person name="Downes M."/>
            <person name="Dugan-Rocha S."/>
            <person name="Dunkov B.C."/>
            <person name="Dunn P."/>
            <person name="Durbin K.J."/>
            <person name="Evangelista C.C."/>
            <person name="Ferraz C."/>
            <person name="Ferriera S."/>
            <person name="Fleischmann W."/>
            <person name="Fosler C."/>
            <person name="Gabrielian A.E."/>
            <person name="Garg N.S."/>
            <person name="Gelbart W.M."/>
            <person name="Glasser K."/>
            <person name="Glodek A."/>
            <person name="Gong F."/>
            <person name="Gorrell J.H."/>
            <person name="Gu Z."/>
            <person name="Guan P."/>
            <person name="Harris M."/>
            <person name="Harris N.L."/>
            <person name="Harvey D.A."/>
            <person name="Heiman T.J."/>
            <person name="Hernandez J.R."/>
            <person name="Houck J."/>
            <person name="Hostin D."/>
            <person name="Houston K.A."/>
            <person name="Howland T.J."/>
            <person name="Wei M.-H."/>
            <person name="Ibegwam C."/>
            <person name="Jalali M."/>
            <person name="Kalush F."/>
            <person name="Karpen G.H."/>
            <person name="Ke Z."/>
            <person name="Kennison J.A."/>
            <person name="Ketchum K.A."/>
            <person name="Kimmel B.E."/>
            <person name="Kodira C.D."/>
            <person name="Kraft C.L."/>
            <person name="Kravitz S."/>
            <person name="Kulp D."/>
            <person name="Lai Z."/>
            <person name="Lasko P."/>
            <person name="Lei Y."/>
            <person name="Levitsky A.A."/>
            <person name="Li J.H."/>
            <person name="Li Z."/>
            <person name="Liang Y."/>
            <person name="Lin X."/>
            <person name="Liu X."/>
            <person name="Mattei B."/>
            <person name="McIntosh T.C."/>
            <person name="McLeod M.P."/>
            <person name="McPherson D."/>
            <person name="Merkulov G."/>
            <person name="Milshina N.V."/>
            <person name="Mobarry C."/>
            <person name="Morris J."/>
            <person name="Moshrefi A."/>
            <person name="Mount S.M."/>
            <person name="Moy M."/>
            <person name="Murphy B."/>
            <person name="Murphy L."/>
            <person name="Muzny D.M."/>
            <person name="Nelson D.L."/>
            <person name="Nelson D.R."/>
            <person name="Nelson K.A."/>
            <person name="Nixon K."/>
            <person name="Nusskern D.R."/>
            <person name="Pacleb J.M."/>
            <person name="Palazzolo M."/>
            <person name="Pittman G.S."/>
            <person name="Pan S."/>
            <person name="Pollard J."/>
            <person name="Puri V."/>
            <person name="Reese M.G."/>
            <person name="Reinert K."/>
            <person name="Remington K."/>
            <person name="Saunders R.D.C."/>
            <person name="Scheeler F."/>
            <person name="Shen H."/>
            <person name="Shue B.C."/>
            <person name="Siden-Kiamos I."/>
            <person name="Simpson M."/>
            <person name="Skupski M.P."/>
            <person name="Smith T.J."/>
            <person name="Spier E."/>
            <person name="Spradling A.C."/>
            <person name="Stapleton M."/>
            <person name="Strong R."/>
            <person name="Sun E."/>
            <person name="Svirskas R."/>
            <person name="Tector C."/>
            <person name="Turner R."/>
            <person name="Venter E."/>
            <person name="Wang A.H."/>
            <person name="Wang X."/>
            <person name="Wang Z.-Y."/>
            <person name="Wassarman D.A."/>
            <person name="Weinstock G.M."/>
            <person name="Weissenbach J."/>
            <person name="Williams S.M."/>
            <person name="Woodage T."/>
            <person name="Worley K.C."/>
            <person name="Wu D."/>
            <person name="Yang S."/>
            <person name="Yao Q.A."/>
            <person name="Ye J."/>
            <person name="Yeh R.-F."/>
            <person name="Zaveri J.S."/>
            <person name="Zhan M."/>
            <person name="Zhang G."/>
            <person name="Zhao Q."/>
            <person name="Zheng L."/>
            <person name="Zheng X.H."/>
            <person name="Zhong F.N."/>
            <person name="Zhong W."/>
            <person name="Zhou X."/>
            <person name="Zhu S.C."/>
            <person name="Zhu X."/>
            <person name="Smith H.O."/>
            <person name="Gibbs R.A."/>
            <person name="Myers E.W."/>
            <person name="Rubin G.M."/>
            <person name="Venter J.C."/>
        </authorList>
    </citation>
    <scope>NUCLEOTIDE SEQUENCE [LARGE SCALE GENOMIC DNA]</scope>
    <source>
        <strain>Berkeley</strain>
    </source>
</reference>
<reference key="4">
    <citation type="journal article" date="2002" name="Genome Biol.">
        <title>Annotation of the Drosophila melanogaster euchromatic genome: a systematic review.</title>
        <authorList>
            <person name="Misra S."/>
            <person name="Crosby M.A."/>
            <person name="Mungall C.J."/>
            <person name="Matthews B.B."/>
            <person name="Campbell K.S."/>
            <person name="Hradecky P."/>
            <person name="Huang Y."/>
            <person name="Kaminker J.S."/>
            <person name="Millburn G.H."/>
            <person name="Prochnik S.E."/>
            <person name="Smith C.D."/>
            <person name="Tupy J.L."/>
            <person name="Whitfield E.J."/>
            <person name="Bayraktaroglu L."/>
            <person name="Berman B.P."/>
            <person name="Bettencourt B.R."/>
            <person name="Celniker S.E."/>
            <person name="de Grey A.D.N.J."/>
            <person name="Drysdale R.A."/>
            <person name="Harris N.L."/>
            <person name="Richter J."/>
            <person name="Russo S."/>
            <person name="Schroeder A.J."/>
            <person name="Shu S.Q."/>
            <person name="Stapleton M."/>
            <person name="Yamada C."/>
            <person name="Ashburner M."/>
            <person name="Gelbart W.M."/>
            <person name="Rubin G.M."/>
            <person name="Lewis S.E."/>
        </authorList>
    </citation>
    <scope>GENOME REANNOTATION</scope>
    <scope>ALTERNATIVE SPLICING</scope>
    <source>
        <strain>Berkeley</strain>
    </source>
</reference>
<reference key="5">
    <citation type="journal article" date="2002" name="Genome Biol.">
        <title>A Drosophila full-length cDNA resource.</title>
        <authorList>
            <person name="Stapleton M."/>
            <person name="Carlson J.W."/>
            <person name="Brokstein P."/>
            <person name="Yu C."/>
            <person name="Champe M."/>
            <person name="George R.A."/>
            <person name="Guarin H."/>
            <person name="Kronmiller B."/>
            <person name="Pacleb J.M."/>
            <person name="Park S."/>
            <person name="Wan K.H."/>
            <person name="Rubin G.M."/>
            <person name="Celniker S.E."/>
        </authorList>
    </citation>
    <scope>NUCLEOTIDE SEQUENCE [LARGE SCALE MRNA] (ISOFORM A)</scope>
    <source>
        <strain>Berkeley</strain>
        <tissue>Embryo</tissue>
    </source>
</reference>
<reference key="6">
    <citation type="submission" date="2009-09" db="EMBL/GenBank/DDBJ databases">
        <authorList>
            <person name="Stapleton M."/>
            <person name="Carlson J.W."/>
            <person name="Booth B."/>
            <person name="Chavez C."/>
            <person name="Frise E."/>
            <person name="George R.A."/>
            <person name="Pacleb J.M."/>
            <person name="Park S."/>
            <person name="Wan K.H."/>
            <person name="Yu C."/>
            <person name="Celniker S.E."/>
        </authorList>
    </citation>
    <scope>NUCLEOTIDE SEQUENCE [LARGE SCALE MRNA] (ISOFORM B)</scope>
    <scope>NUCLEOTIDE SEQUENCE [LARGE SCALE MRNA] OF 1-343 (ISOFORM C)</scope>
    <source>
        <strain>Berkeley</strain>
        <tissue>Embryo</tissue>
    </source>
</reference>